<name>HSCA_SERP5</name>
<protein>
    <recommendedName>
        <fullName evidence="1">Chaperone protein HscA</fullName>
    </recommendedName>
    <alternativeName>
        <fullName evidence="1">Hsc66</fullName>
    </alternativeName>
</protein>
<feature type="chain" id="PRO_1000061968" description="Chaperone protein HscA">
    <location>
        <begin position="1"/>
        <end position="616"/>
    </location>
</feature>
<accession>A8GHX9</accession>
<reference key="1">
    <citation type="submission" date="2007-09" db="EMBL/GenBank/DDBJ databases">
        <title>Complete sequence of chromosome of Serratia proteamaculans 568.</title>
        <authorList>
            <consortium name="US DOE Joint Genome Institute"/>
            <person name="Copeland A."/>
            <person name="Lucas S."/>
            <person name="Lapidus A."/>
            <person name="Barry K."/>
            <person name="Glavina del Rio T."/>
            <person name="Dalin E."/>
            <person name="Tice H."/>
            <person name="Pitluck S."/>
            <person name="Chain P."/>
            <person name="Malfatti S."/>
            <person name="Shin M."/>
            <person name="Vergez L."/>
            <person name="Schmutz J."/>
            <person name="Larimer F."/>
            <person name="Land M."/>
            <person name="Hauser L."/>
            <person name="Kyrpides N."/>
            <person name="Kim E."/>
            <person name="Taghavi S."/>
            <person name="Newman L."/>
            <person name="Vangronsveld J."/>
            <person name="van der Lelie D."/>
            <person name="Richardson P."/>
        </authorList>
    </citation>
    <scope>NUCLEOTIDE SEQUENCE [LARGE SCALE GENOMIC DNA]</scope>
    <source>
        <strain>568</strain>
    </source>
</reference>
<comment type="function">
    <text evidence="1">Chaperone involved in the maturation of iron-sulfur cluster-containing proteins. Has a low intrinsic ATPase activity which is markedly stimulated by HscB. Involved in the maturation of IscU.</text>
</comment>
<comment type="similarity">
    <text evidence="1">Belongs to the heat shock protein 70 family.</text>
</comment>
<proteinExistence type="inferred from homology"/>
<keyword id="KW-0067">ATP-binding</keyword>
<keyword id="KW-0143">Chaperone</keyword>
<keyword id="KW-0547">Nucleotide-binding</keyword>
<sequence length="616" mass="64819">MALLQISEPGLSAAPHQRRLAAGIDLGTTNSLVATVRSGQAETLADAEGRDLLPSVVHYQADTLRVGWDARQQAAQDPANTISSVKRMMGRSLADVLARYPNLPYQFQASDNGLPMMLTAAGAVNPVGVSADILRALAERAKTALEGDLDGVVITVPAYFDDAQRQGTKDAARLAGLHVLRLLNEPTAAAIAYGLDSGQEGIIAVYDLGGGTFDISILRLSRGVFEVLATGGDSALGGDDFDHLLADWLREQAGVADRSDHGVQRQLLDAAIAAKVALSDADSTVVEIAGWQGEVTRAQFDALIATLVKRTLMACRRALKDAGVSAEEVLEVVMVGGSTRVPLVREQVGTFFGRTPLTSIDPDKVVAIGAAIQADILVGNKPDSDMLLLDVIPLSLGLETMGGLVEKVIPRNTTIPVARAQEFTTFKDGQSAMMIHVLQGERELVQDCRSLARFSLRGLPPLPAGGAHIRVTFQVDADGLLSVTAMEKSTGVEASIQVKPSYGLSDAEIAGMIKDSMANAQSDVGARMLAEQRVEASRVLESLQGALASDAALLSEAESTAIPAAVEALQQATQGTDPAAIEAAIKTLDAQTQDFAARRMDASIRRALAGHSVDEV</sequence>
<dbReference type="EMBL" id="CP000826">
    <property type="protein sequence ID" value="ABV42719.1"/>
    <property type="molecule type" value="Genomic_DNA"/>
</dbReference>
<dbReference type="SMR" id="A8GHX9"/>
<dbReference type="STRING" id="399741.Spro_3623"/>
<dbReference type="KEGG" id="spe:Spro_3623"/>
<dbReference type="eggNOG" id="COG0443">
    <property type="taxonomic scope" value="Bacteria"/>
</dbReference>
<dbReference type="HOGENOM" id="CLU_005965_2_3_6"/>
<dbReference type="OrthoDB" id="9766019at2"/>
<dbReference type="GO" id="GO:0005524">
    <property type="term" value="F:ATP binding"/>
    <property type="evidence" value="ECO:0007669"/>
    <property type="project" value="UniProtKB-KW"/>
</dbReference>
<dbReference type="GO" id="GO:0016887">
    <property type="term" value="F:ATP hydrolysis activity"/>
    <property type="evidence" value="ECO:0007669"/>
    <property type="project" value="UniProtKB-UniRule"/>
</dbReference>
<dbReference type="GO" id="GO:0140662">
    <property type="term" value="F:ATP-dependent protein folding chaperone"/>
    <property type="evidence" value="ECO:0007669"/>
    <property type="project" value="InterPro"/>
</dbReference>
<dbReference type="GO" id="GO:0051082">
    <property type="term" value="F:unfolded protein binding"/>
    <property type="evidence" value="ECO:0007669"/>
    <property type="project" value="InterPro"/>
</dbReference>
<dbReference type="GO" id="GO:0016226">
    <property type="term" value="P:iron-sulfur cluster assembly"/>
    <property type="evidence" value="ECO:0007669"/>
    <property type="project" value="InterPro"/>
</dbReference>
<dbReference type="CDD" id="cd10236">
    <property type="entry name" value="ASKHA_NBD_HSP70_HscA"/>
    <property type="match status" value="1"/>
</dbReference>
<dbReference type="FunFam" id="3.30.420.40:FF:000046">
    <property type="entry name" value="Chaperone protein HscA"/>
    <property type="match status" value="1"/>
</dbReference>
<dbReference type="FunFam" id="3.90.640.10:FF:000013">
    <property type="entry name" value="Chaperone protein HscA"/>
    <property type="match status" value="1"/>
</dbReference>
<dbReference type="FunFam" id="2.60.34.10:FF:000005">
    <property type="entry name" value="Chaperone protein HscA homolog"/>
    <property type="match status" value="1"/>
</dbReference>
<dbReference type="Gene3D" id="1.20.1270.10">
    <property type="match status" value="1"/>
</dbReference>
<dbReference type="Gene3D" id="3.30.420.40">
    <property type="match status" value="2"/>
</dbReference>
<dbReference type="Gene3D" id="3.90.640.10">
    <property type="entry name" value="Actin, Chain A, domain 4"/>
    <property type="match status" value="1"/>
</dbReference>
<dbReference type="Gene3D" id="2.60.34.10">
    <property type="entry name" value="Substrate Binding Domain Of DNAk, Chain A, domain 1"/>
    <property type="match status" value="1"/>
</dbReference>
<dbReference type="HAMAP" id="MF_00679">
    <property type="entry name" value="HscA"/>
    <property type="match status" value="1"/>
</dbReference>
<dbReference type="InterPro" id="IPR043129">
    <property type="entry name" value="ATPase_NBD"/>
</dbReference>
<dbReference type="InterPro" id="IPR018181">
    <property type="entry name" value="Heat_shock_70_CS"/>
</dbReference>
<dbReference type="InterPro" id="IPR042039">
    <property type="entry name" value="HscA_NBD"/>
</dbReference>
<dbReference type="InterPro" id="IPR029048">
    <property type="entry name" value="HSP70_C_sf"/>
</dbReference>
<dbReference type="InterPro" id="IPR029047">
    <property type="entry name" value="HSP70_peptide-bd_sf"/>
</dbReference>
<dbReference type="InterPro" id="IPR013126">
    <property type="entry name" value="Hsp_70_fam"/>
</dbReference>
<dbReference type="InterPro" id="IPR010236">
    <property type="entry name" value="ISC_FeS_clus_asmbl_HscA"/>
</dbReference>
<dbReference type="NCBIfam" id="TIGR01991">
    <property type="entry name" value="HscA"/>
    <property type="match status" value="1"/>
</dbReference>
<dbReference type="NCBIfam" id="NF003520">
    <property type="entry name" value="PRK05183.1"/>
    <property type="match status" value="1"/>
</dbReference>
<dbReference type="PANTHER" id="PTHR19375">
    <property type="entry name" value="HEAT SHOCK PROTEIN 70KDA"/>
    <property type="match status" value="1"/>
</dbReference>
<dbReference type="Pfam" id="PF00012">
    <property type="entry name" value="HSP70"/>
    <property type="match status" value="1"/>
</dbReference>
<dbReference type="PRINTS" id="PR00301">
    <property type="entry name" value="HEATSHOCK70"/>
</dbReference>
<dbReference type="SUPFAM" id="SSF53067">
    <property type="entry name" value="Actin-like ATPase domain"/>
    <property type="match status" value="2"/>
</dbReference>
<dbReference type="SUPFAM" id="SSF100934">
    <property type="entry name" value="Heat shock protein 70kD (HSP70), C-terminal subdomain"/>
    <property type="match status" value="1"/>
</dbReference>
<dbReference type="SUPFAM" id="SSF100920">
    <property type="entry name" value="Heat shock protein 70kD (HSP70), peptide-binding domain"/>
    <property type="match status" value="1"/>
</dbReference>
<dbReference type="PROSITE" id="PS00297">
    <property type="entry name" value="HSP70_1"/>
    <property type="match status" value="1"/>
</dbReference>
<dbReference type="PROSITE" id="PS00329">
    <property type="entry name" value="HSP70_2"/>
    <property type="match status" value="1"/>
</dbReference>
<dbReference type="PROSITE" id="PS01036">
    <property type="entry name" value="HSP70_3"/>
    <property type="match status" value="1"/>
</dbReference>
<organism>
    <name type="scientific">Serratia proteamaculans (strain 568)</name>
    <dbReference type="NCBI Taxonomy" id="399741"/>
    <lineage>
        <taxon>Bacteria</taxon>
        <taxon>Pseudomonadati</taxon>
        <taxon>Pseudomonadota</taxon>
        <taxon>Gammaproteobacteria</taxon>
        <taxon>Enterobacterales</taxon>
        <taxon>Yersiniaceae</taxon>
        <taxon>Serratia</taxon>
    </lineage>
</organism>
<evidence type="ECO:0000255" key="1">
    <source>
        <dbReference type="HAMAP-Rule" id="MF_00679"/>
    </source>
</evidence>
<gene>
    <name evidence="1" type="primary">hscA</name>
    <name type="ordered locus">Spro_3623</name>
</gene>